<sequence>MASIHRPKRGSLAFSPRKRAKSHIPRFRAWPEATGEPKLQSFAGYKVGMTHVIMVDDTKNSLTQGMEISVPVTVIETPAIRVAAIRAYAEDSTGEKAIAEVWAADLDPELKRRIPIPAAGNQAEALENIGKLIEEGRVSDVRAVIYTLPKSLTGVPKKVPDIMESGISARDLGTKFEYSKTILGTLVSVTDVFKNGTLVDTAAITIGKGTQGPVKRWGIQLMKGKHSRQGSLRQVGTLGAFNPSRVSWRVPQMGQMGYHQRTEFNKRILKIGSDGEEVTPEGGFINYGLVRGDYILIKGSVPGPSKRLIRLRDPIRAKKADLGEPNILYISRESKQG</sequence>
<comment type="function">
    <text evidence="1">One of the primary rRNA binding proteins, it binds directly near the 3'-end of the 23S rRNA, where it nucleates assembly of the 50S subunit.</text>
</comment>
<comment type="subunit">
    <text evidence="1">Part of the 50S ribosomal subunit. Forms a cluster with proteins L14 and L24e.</text>
</comment>
<comment type="similarity">
    <text evidence="1">Belongs to the universal ribosomal protein uL3 family.</text>
</comment>
<name>RL3_METAC</name>
<gene>
    <name evidence="1" type="primary">rpl3</name>
    <name type="ordered locus">MA_1072</name>
</gene>
<accession>Q8TRU7</accession>
<organism>
    <name type="scientific">Methanosarcina acetivorans (strain ATCC 35395 / DSM 2834 / JCM 12185 / C2A)</name>
    <dbReference type="NCBI Taxonomy" id="188937"/>
    <lineage>
        <taxon>Archaea</taxon>
        <taxon>Methanobacteriati</taxon>
        <taxon>Methanobacteriota</taxon>
        <taxon>Stenosarchaea group</taxon>
        <taxon>Methanomicrobia</taxon>
        <taxon>Methanosarcinales</taxon>
        <taxon>Methanosarcinaceae</taxon>
        <taxon>Methanosarcina</taxon>
    </lineage>
</organism>
<protein>
    <recommendedName>
        <fullName evidence="1">Large ribosomal subunit protein uL3</fullName>
    </recommendedName>
    <alternativeName>
        <fullName evidence="3">50S ribosomal protein L3</fullName>
    </alternativeName>
</protein>
<feature type="chain" id="PRO_0000077209" description="Large ribosomal subunit protein uL3">
    <location>
        <begin position="1"/>
        <end position="337"/>
    </location>
</feature>
<feature type="region of interest" description="Disordered" evidence="2">
    <location>
        <begin position="1"/>
        <end position="20"/>
    </location>
</feature>
<evidence type="ECO:0000255" key="1">
    <source>
        <dbReference type="HAMAP-Rule" id="MF_01325"/>
    </source>
</evidence>
<evidence type="ECO:0000256" key="2">
    <source>
        <dbReference type="SAM" id="MobiDB-lite"/>
    </source>
</evidence>
<evidence type="ECO:0000305" key="3"/>
<dbReference type="EMBL" id="AE010299">
    <property type="protein sequence ID" value="AAM04497.1"/>
    <property type="molecule type" value="Genomic_DNA"/>
</dbReference>
<dbReference type="RefSeq" id="WP_011021101.1">
    <property type="nucleotide sequence ID" value="NC_003552.1"/>
</dbReference>
<dbReference type="SMR" id="Q8TRU7"/>
<dbReference type="FunCoup" id="Q8TRU7">
    <property type="interactions" value="130"/>
</dbReference>
<dbReference type="STRING" id="188937.MA_1072"/>
<dbReference type="EnsemblBacteria" id="AAM04497">
    <property type="protein sequence ID" value="AAM04497"/>
    <property type="gene ID" value="MA_1072"/>
</dbReference>
<dbReference type="GeneID" id="1472962"/>
<dbReference type="KEGG" id="mac:MA_1072"/>
<dbReference type="HOGENOM" id="CLU_033361_2_0_2"/>
<dbReference type="InParanoid" id="Q8TRU7"/>
<dbReference type="OrthoDB" id="6121at2157"/>
<dbReference type="PhylomeDB" id="Q8TRU7"/>
<dbReference type="Proteomes" id="UP000002487">
    <property type="component" value="Chromosome"/>
</dbReference>
<dbReference type="GO" id="GO:0022625">
    <property type="term" value="C:cytosolic large ribosomal subunit"/>
    <property type="evidence" value="ECO:0000318"/>
    <property type="project" value="GO_Central"/>
</dbReference>
<dbReference type="GO" id="GO:0003723">
    <property type="term" value="F:RNA binding"/>
    <property type="evidence" value="ECO:0000318"/>
    <property type="project" value="GO_Central"/>
</dbReference>
<dbReference type="GO" id="GO:0019843">
    <property type="term" value="F:rRNA binding"/>
    <property type="evidence" value="ECO:0007669"/>
    <property type="project" value="UniProtKB-UniRule"/>
</dbReference>
<dbReference type="GO" id="GO:0003735">
    <property type="term" value="F:structural constituent of ribosome"/>
    <property type="evidence" value="ECO:0000318"/>
    <property type="project" value="GO_Central"/>
</dbReference>
<dbReference type="GO" id="GO:0006412">
    <property type="term" value="P:translation"/>
    <property type="evidence" value="ECO:0000318"/>
    <property type="project" value="GO_Central"/>
</dbReference>
<dbReference type="Gene3D" id="3.30.1430.10">
    <property type="match status" value="1"/>
</dbReference>
<dbReference type="Gene3D" id="4.10.960.10">
    <property type="entry name" value="Ribosomal protein L3, domain 3"/>
    <property type="match status" value="1"/>
</dbReference>
<dbReference type="Gene3D" id="2.40.30.10">
    <property type="entry name" value="Translation factors"/>
    <property type="match status" value="1"/>
</dbReference>
<dbReference type="HAMAP" id="MF_01325_A">
    <property type="entry name" value="Ribosomal_uL3_A"/>
    <property type="match status" value="1"/>
</dbReference>
<dbReference type="InterPro" id="IPR045077">
    <property type="entry name" value="L3_arc_euk"/>
</dbReference>
<dbReference type="InterPro" id="IPR044892">
    <property type="entry name" value="Ribosomal_L3_dom_3_arc_sf"/>
</dbReference>
<dbReference type="InterPro" id="IPR000597">
    <property type="entry name" value="Ribosomal_uL3"/>
</dbReference>
<dbReference type="InterPro" id="IPR019928">
    <property type="entry name" value="Ribosomal_uL3_arc"/>
</dbReference>
<dbReference type="InterPro" id="IPR019926">
    <property type="entry name" value="Ribosomal_uL3_CS"/>
</dbReference>
<dbReference type="InterPro" id="IPR009000">
    <property type="entry name" value="Transl_B-barrel_sf"/>
</dbReference>
<dbReference type="NCBIfam" id="TIGR03626">
    <property type="entry name" value="L3_arch"/>
    <property type="match status" value="1"/>
</dbReference>
<dbReference type="NCBIfam" id="NF003261">
    <property type="entry name" value="PRK04231.1"/>
    <property type="match status" value="1"/>
</dbReference>
<dbReference type="PANTHER" id="PTHR11363">
    <property type="entry name" value="60S RIBOSOMAL PROTEIN L3-RELATED"/>
    <property type="match status" value="1"/>
</dbReference>
<dbReference type="PANTHER" id="PTHR11363:SF5">
    <property type="entry name" value="LARGE RIBOSOMAL SUBUNIT PROTEIN UL3"/>
    <property type="match status" value="1"/>
</dbReference>
<dbReference type="Pfam" id="PF00297">
    <property type="entry name" value="Ribosomal_L3"/>
    <property type="match status" value="1"/>
</dbReference>
<dbReference type="SUPFAM" id="SSF50447">
    <property type="entry name" value="Translation proteins"/>
    <property type="match status" value="1"/>
</dbReference>
<dbReference type="PROSITE" id="PS00474">
    <property type="entry name" value="RIBOSOMAL_L3"/>
    <property type="match status" value="1"/>
</dbReference>
<keyword id="KW-1185">Reference proteome</keyword>
<keyword id="KW-0687">Ribonucleoprotein</keyword>
<keyword id="KW-0689">Ribosomal protein</keyword>
<keyword id="KW-0694">RNA-binding</keyword>
<keyword id="KW-0699">rRNA-binding</keyword>
<proteinExistence type="inferred from homology"/>
<reference key="1">
    <citation type="journal article" date="2002" name="Genome Res.">
        <title>The genome of Methanosarcina acetivorans reveals extensive metabolic and physiological diversity.</title>
        <authorList>
            <person name="Galagan J.E."/>
            <person name="Nusbaum C."/>
            <person name="Roy A."/>
            <person name="Endrizzi M.G."/>
            <person name="Macdonald P."/>
            <person name="FitzHugh W."/>
            <person name="Calvo S."/>
            <person name="Engels R."/>
            <person name="Smirnov S."/>
            <person name="Atnoor D."/>
            <person name="Brown A."/>
            <person name="Allen N."/>
            <person name="Naylor J."/>
            <person name="Stange-Thomann N."/>
            <person name="DeArellano K."/>
            <person name="Johnson R."/>
            <person name="Linton L."/>
            <person name="McEwan P."/>
            <person name="McKernan K."/>
            <person name="Talamas J."/>
            <person name="Tirrell A."/>
            <person name="Ye W."/>
            <person name="Zimmer A."/>
            <person name="Barber R.D."/>
            <person name="Cann I."/>
            <person name="Graham D.E."/>
            <person name="Grahame D.A."/>
            <person name="Guss A.M."/>
            <person name="Hedderich R."/>
            <person name="Ingram-Smith C."/>
            <person name="Kuettner H.C."/>
            <person name="Krzycki J.A."/>
            <person name="Leigh J.A."/>
            <person name="Li W."/>
            <person name="Liu J."/>
            <person name="Mukhopadhyay B."/>
            <person name="Reeve J.N."/>
            <person name="Smith K."/>
            <person name="Springer T.A."/>
            <person name="Umayam L.A."/>
            <person name="White O."/>
            <person name="White R.H."/>
            <person name="de Macario E.C."/>
            <person name="Ferry J.G."/>
            <person name="Jarrell K.F."/>
            <person name="Jing H."/>
            <person name="Macario A.J.L."/>
            <person name="Paulsen I.T."/>
            <person name="Pritchett M."/>
            <person name="Sowers K.R."/>
            <person name="Swanson R.V."/>
            <person name="Zinder S.H."/>
            <person name="Lander E."/>
            <person name="Metcalf W.W."/>
            <person name="Birren B."/>
        </authorList>
    </citation>
    <scope>NUCLEOTIDE SEQUENCE [LARGE SCALE GENOMIC DNA]</scope>
    <source>
        <strain>ATCC 35395 / DSM 2834 / JCM 12185 / C2A</strain>
    </source>
</reference>